<name>RBL_LUPPA</name>
<gene>
    <name evidence="1" type="primary">rbcL</name>
</gene>
<proteinExistence type="inferred from homology"/>
<sequence length="455" mass="50287">SVGFKAGVKDYKLTYYTPDYQTKDTDILAAFRVTPQPGVPPEEAGAAVAAESSTGTWTTVWTDGLTSLDRYKGRCYHIEPVAGEESQFIAYVAYPLDLFEEGSVTNMFTSIVGNVFGFKALRALRLEDLRIPNAYVKTFQGPPHGIQVERDKLNKYGRPLLGCTIKPKLGLSAKNYGRAVYECLRGGLDFTKDDENVNSQPFMRWRDRFLFCAEALYKAQAETGEIKGHYLNATAGTCEEMIKRAVFARELGVPIVMHDYLTGGFTANTSLAHYCRDNGLLLHIHRAMHAVIDRQKNHGMHFRVLAKALRLSGGDHIHSGTVVGKLEGEREITLGFVDLLRDDFVEKDRSRGIYFTQDWVSLPGVLPVASGGIHVWHMPALTEIFGDDSVLQFGGGTLGHPWGNAPGAVANRVALEACVQARNEGRDLASEGNQIIREASKWSPELAAACEVWKE</sequence>
<reference key="1">
    <citation type="journal article" date="1995" name="Bot. Acta">
        <title>Molecular phylogeny of the Papilionoideae (family Leguminosae): rbcL sequences versus chemical taxonomy.</title>
        <authorList>
            <person name="Kaess E."/>
            <person name="Wink M."/>
        </authorList>
    </citation>
    <scope>NUCLEOTIDE SEQUENCE [GENOMIC DNA]</scope>
    <source>
        <tissue>Leaf</tissue>
    </source>
</reference>
<organism>
    <name type="scientific">Lupinus paraguariensis</name>
    <name type="common">Lupine</name>
    <dbReference type="NCBI Taxonomy" id="53235"/>
    <lineage>
        <taxon>Eukaryota</taxon>
        <taxon>Viridiplantae</taxon>
        <taxon>Streptophyta</taxon>
        <taxon>Embryophyta</taxon>
        <taxon>Tracheophyta</taxon>
        <taxon>Spermatophyta</taxon>
        <taxon>Magnoliopsida</taxon>
        <taxon>eudicotyledons</taxon>
        <taxon>Gunneridae</taxon>
        <taxon>Pentapetalae</taxon>
        <taxon>rosids</taxon>
        <taxon>fabids</taxon>
        <taxon>Fabales</taxon>
        <taxon>Fabaceae</taxon>
        <taxon>Papilionoideae</taxon>
        <taxon>50 kb inversion clade</taxon>
        <taxon>genistoids sensu lato</taxon>
        <taxon>core genistoids</taxon>
        <taxon>Genisteae</taxon>
        <taxon>Lupinus</taxon>
    </lineage>
</organism>
<accession>P69587</accession>
<accession>P92396</accession>
<accession>P92399</accession>
<accession>P92408</accession>
<comment type="function">
    <text evidence="1">RuBisCO catalyzes two reactions: the carboxylation of D-ribulose 1,5-bisphosphate, the primary event in carbon dioxide fixation, as well as the oxidative fragmentation of the pentose substrate in the photorespiration process. Both reactions occur simultaneously and in competition at the same active site.</text>
</comment>
<comment type="catalytic activity">
    <reaction evidence="1">
        <text>2 (2R)-3-phosphoglycerate + 2 H(+) = D-ribulose 1,5-bisphosphate + CO2 + H2O</text>
        <dbReference type="Rhea" id="RHEA:23124"/>
        <dbReference type="ChEBI" id="CHEBI:15377"/>
        <dbReference type="ChEBI" id="CHEBI:15378"/>
        <dbReference type="ChEBI" id="CHEBI:16526"/>
        <dbReference type="ChEBI" id="CHEBI:57870"/>
        <dbReference type="ChEBI" id="CHEBI:58272"/>
        <dbReference type="EC" id="4.1.1.39"/>
    </reaction>
</comment>
<comment type="catalytic activity">
    <reaction evidence="1">
        <text>D-ribulose 1,5-bisphosphate + O2 = 2-phosphoglycolate + (2R)-3-phosphoglycerate + 2 H(+)</text>
        <dbReference type="Rhea" id="RHEA:36631"/>
        <dbReference type="ChEBI" id="CHEBI:15378"/>
        <dbReference type="ChEBI" id="CHEBI:15379"/>
        <dbReference type="ChEBI" id="CHEBI:57870"/>
        <dbReference type="ChEBI" id="CHEBI:58033"/>
        <dbReference type="ChEBI" id="CHEBI:58272"/>
    </reaction>
</comment>
<comment type="cofactor">
    <cofactor evidence="1">
        <name>Mg(2+)</name>
        <dbReference type="ChEBI" id="CHEBI:18420"/>
    </cofactor>
    <text evidence="1">Binds 1 Mg(2+) ion per subunit.</text>
</comment>
<comment type="subunit">
    <text evidence="1">Heterohexadecamer of 8 large chains and 8 small chains; disulfide-linked. The disulfide link is formed within the large subunit homodimers.</text>
</comment>
<comment type="subcellular location">
    <subcellularLocation>
        <location>Plastid</location>
        <location>Chloroplast</location>
    </subcellularLocation>
</comment>
<comment type="PTM">
    <text evidence="1">The disulfide bond which can form in the large chain dimeric partners within the hexadecamer appears to be associated with oxidative stress and protein turnover.</text>
</comment>
<comment type="miscellaneous">
    <text evidence="1">The basic functional RuBisCO is composed of a large chain homodimer in a 'head-to-tail' conformation. In form I RuBisCO this homodimer is arranged in a barrel-like tetramer with the small subunits forming a tetrameric 'cap' on each end of the 'barrel'.</text>
</comment>
<comment type="similarity">
    <text evidence="1">Belongs to the RuBisCO large chain family. Type I subfamily.</text>
</comment>
<protein>
    <recommendedName>
        <fullName evidence="1">Ribulose bisphosphate carboxylase large chain</fullName>
        <shortName evidence="1">RuBisCO large subunit</shortName>
        <ecNumber evidence="1">4.1.1.39</ecNumber>
    </recommendedName>
</protein>
<keyword id="KW-0113">Calvin cycle</keyword>
<keyword id="KW-0120">Carbon dioxide fixation</keyword>
<keyword id="KW-0150">Chloroplast</keyword>
<keyword id="KW-1015">Disulfide bond</keyword>
<keyword id="KW-0456">Lyase</keyword>
<keyword id="KW-0460">Magnesium</keyword>
<keyword id="KW-0479">Metal-binding</keyword>
<keyword id="KW-0488">Methylation</keyword>
<keyword id="KW-0503">Monooxygenase</keyword>
<keyword id="KW-0560">Oxidoreductase</keyword>
<keyword id="KW-0601">Photorespiration</keyword>
<keyword id="KW-0602">Photosynthesis</keyword>
<keyword id="KW-0934">Plastid</keyword>
<dbReference type="EC" id="4.1.1.39" evidence="1"/>
<dbReference type="EMBL" id="Z70076">
    <property type="protein sequence ID" value="CAA93935.1"/>
    <property type="molecule type" value="Genomic_DNA"/>
</dbReference>
<dbReference type="SMR" id="P69587"/>
<dbReference type="GO" id="GO:0009507">
    <property type="term" value="C:chloroplast"/>
    <property type="evidence" value="ECO:0007669"/>
    <property type="project" value="UniProtKB-SubCell"/>
</dbReference>
<dbReference type="GO" id="GO:0000287">
    <property type="term" value="F:magnesium ion binding"/>
    <property type="evidence" value="ECO:0007669"/>
    <property type="project" value="InterPro"/>
</dbReference>
<dbReference type="GO" id="GO:0004497">
    <property type="term" value="F:monooxygenase activity"/>
    <property type="evidence" value="ECO:0007669"/>
    <property type="project" value="UniProtKB-KW"/>
</dbReference>
<dbReference type="GO" id="GO:0016984">
    <property type="term" value="F:ribulose-bisphosphate carboxylase activity"/>
    <property type="evidence" value="ECO:0007669"/>
    <property type="project" value="UniProtKB-EC"/>
</dbReference>
<dbReference type="GO" id="GO:0009853">
    <property type="term" value="P:photorespiration"/>
    <property type="evidence" value="ECO:0007669"/>
    <property type="project" value="UniProtKB-KW"/>
</dbReference>
<dbReference type="GO" id="GO:0019253">
    <property type="term" value="P:reductive pentose-phosphate cycle"/>
    <property type="evidence" value="ECO:0007669"/>
    <property type="project" value="UniProtKB-KW"/>
</dbReference>
<dbReference type="CDD" id="cd08212">
    <property type="entry name" value="RuBisCO_large_I"/>
    <property type="match status" value="1"/>
</dbReference>
<dbReference type="FunFam" id="3.20.20.110:FF:000001">
    <property type="entry name" value="Ribulose bisphosphate carboxylase large chain"/>
    <property type="match status" value="1"/>
</dbReference>
<dbReference type="FunFam" id="3.30.70.150:FF:000001">
    <property type="entry name" value="Ribulose bisphosphate carboxylase large chain"/>
    <property type="match status" value="1"/>
</dbReference>
<dbReference type="Gene3D" id="3.20.20.110">
    <property type="entry name" value="Ribulose bisphosphate carboxylase, large subunit, C-terminal domain"/>
    <property type="match status" value="1"/>
</dbReference>
<dbReference type="Gene3D" id="3.30.70.150">
    <property type="entry name" value="RuBisCO large subunit, N-terminal domain"/>
    <property type="match status" value="1"/>
</dbReference>
<dbReference type="HAMAP" id="MF_01338">
    <property type="entry name" value="RuBisCO_L_type1"/>
    <property type="match status" value="1"/>
</dbReference>
<dbReference type="InterPro" id="IPR033966">
    <property type="entry name" value="RuBisCO"/>
</dbReference>
<dbReference type="InterPro" id="IPR020878">
    <property type="entry name" value="RuBisCo_large_chain_AS"/>
</dbReference>
<dbReference type="InterPro" id="IPR000685">
    <property type="entry name" value="RuBisCO_lsu_C"/>
</dbReference>
<dbReference type="InterPro" id="IPR036376">
    <property type="entry name" value="RuBisCO_lsu_C_sf"/>
</dbReference>
<dbReference type="InterPro" id="IPR017443">
    <property type="entry name" value="RuBisCO_lsu_fd_N"/>
</dbReference>
<dbReference type="InterPro" id="IPR036422">
    <property type="entry name" value="RuBisCO_lsu_N_sf"/>
</dbReference>
<dbReference type="InterPro" id="IPR020888">
    <property type="entry name" value="RuBisCO_lsuI"/>
</dbReference>
<dbReference type="NCBIfam" id="NF003252">
    <property type="entry name" value="PRK04208.1"/>
    <property type="match status" value="1"/>
</dbReference>
<dbReference type="PANTHER" id="PTHR42704">
    <property type="entry name" value="RIBULOSE BISPHOSPHATE CARBOXYLASE"/>
    <property type="match status" value="1"/>
</dbReference>
<dbReference type="PANTHER" id="PTHR42704:SF16">
    <property type="entry name" value="RIBULOSE BISPHOSPHATE CARBOXYLASE LARGE CHAIN"/>
    <property type="match status" value="1"/>
</dbReference>
<dbReference type="Pfam" id="PF00016">
    <property type="entry name" value="RuBisCO_large"/>
    <property type="match status" value="1"/>
</dbReference>
<dbReference type="Pfam" id="PF02788">
    <property type="entry name" value="RuBisCO_large_N"/>
    <property type="match status" value="1"/>
</dbReference>
<dbReference type="SFLD" id="SFLDG01052">
    <property type="entry name" value="RuBisCO"/>
    <property type="match status" value="1"/>
</dbReference>
<dbReference type="SFLD" id="SFLDS00014">
    <property type="entry name" value="RuBisCO"/>
    <property type="match status" value="1"/>
</dbReference>
<dbReference type="SFLD" id="SFLDG00301">
    <property type="entry name" value="RuBisCO-like_proteins"/>
    <property type="match status" value="1"/>
</dbReference>
<dbReference type="SUPFAM" id="SSF51649">
    <property type="entry name" value="RuBisCo, C-terminal domain"/>
    <property type="match status" value="1"/>
</dbReference>
<dbReference type="SUPFAM" id="SSF54966">
    <property type="entry name" value="RuBisCO, large subunit, small (N-terminal) domain"/>
    <property type="match status" value="1"/>
</dbReference>
<dbReference type="PROSITE" id="PS00157">
    <property type="entry name" value="RUBISCO_LARGE"/>
    <property type="match status" value="1"/>
</dbReference>
<geneLocation type="chloroplast"/>
<evidence type="ECO:0000255" key="1">
    <source>
        <dbReference type="HAMAP-Rule" id="MF_01338"/>
    </source>
</evidence>
<feature type="chain" id="PRO_0000062524" description="Ribulose bisphosphate carboxylase large chain">
    <location>
        <begin position="1" status="less than"/>
        <end position="455" status="greater than"/>
    </location>
</feature>
<feature type="active site" description="Proton acceptor" evidence="1">
    <location>
        <position position="166"/>
    </location>
</feature>
<feature type="active site" description="Proton acceptor" evidence="1">
    <location>
        <position position="285"/>
    </location>
</feature>
<feature type="binding site" description="in homodimeric partner" evidence="1">
    <location>
        <position position="114"/>
    </location>
    <ligand>
        <name>substrate</name>
    </ligand>
</feature>
<feature type="binding site" evidence="1">
    <location>
        <position position="164"/>
    </location>
    <ligand>
        <name>substrate</name>
    </ligand>
</feature>
<feature type="binding site" evidence="1">
    <location>
        <position position="168"/>
    </location>
    <ligand>
        <name>substrate</name>
    </ligand>
</feature>
<feature type="binding site" description="via carbamate group" evidence="1">
    <location>
        <position position="192"/>
    </location>
    <ligand>
        <name>Mg(2+)</name>
        <dbReference type="ChEBI" id="CHEBI:18420"/>
    </ligand>
</feature>
<feature type="binding site" evidence="1">
    <location>
        <position position="194"/>
    </location>
    <ligand>
        <name>Mg(2+)</name>
        <dbReference type="ChEBI" id="CHEBI:18420"/>
    </ligand>
</feature>
<feature type="binding site" evidence="1">
    <location>
        <position position="195"/>
    </location>
    <ligand>
        <name>Mg(2+)</name>
        <dbReference type="ChEBI" id="CHEBI:18420"/>
    </ligand>
</feature>
<feature type="binding site" evidence="1">
    <location>
        <position position="286"/>
    </location>
    <ligand>
        <name>substrate</name>
    </ligand>
</feature>
<feature type="binding site" evidence="1">
    <location>
        <position position="318"/>
    </location>
    <ligand>
        <name>substrate</name>
    </ligand>
</feature>
<feature type="binding site" evidence="1">
    <location>
        <position position="370"/>
    </location>
    <ligand>
        <name>substrate</name>
    </ligand>
</feature>
<feature type="site" description="Transition state stabilizer" evidence="1">
    <location>
        <position position="325"/>
    </location>
</feature>
<feature type="modified residue" description="N6,N6,N6-trimethyllysine" evidence="1">
    <location>
        <position position="5"/>
    </location>
</feature>
<feature type="modified residue" description="N6-carboxylysine" evidence="1">
    <location>
        <position position="192"/>
    </location>
</feature>
<feature type="disulfide bond" description="Interchain; in linked form" evidence="1">
    <location>
        <position position="238"/>
    </location>
</feature>
<feature type="non-terminal residue">
    <location>
        <position position="1"/>
    </location>
</feature>
<feature type="non-terminal residue">
    <location>
        <position position="455"/>
    </location>
</feature>